<gene>
    <name evidence="1" type="primary">hemL</name>
    <name type="ordered locus">HPSH_01585</name>
</gene>
<keyword id="KW-0963">Cytoplasm</keyword>
<keyword id="KW-0413">Isomerase</keyword>
<keyword id="KW-0627">Porphyrin biosynthesis</keyword>
<keyword id="KW-0663">Pyridoxal phosphate</keyword>
<accession>B2USD7</accession>
<feature type="chain" id="PRO_1000121896" description="Glutamate-1-semialdehyde 2,1-aminomutase">
    <location>
        <begin position="1"/>
        <end position="430"/>
    </location>
</feature>
<feature type="modified residue" description="N6-(pyridoxal phosphate)lysine" evidence="1">
    <location>
        <position position="265"/>
    </location>
</feature>
<protein>
    <recommendedName>
        <fullName evidence="1">Glutamate-1-semialdehyde 2,1-aminomutase</fullName>
        <shortName evidence="1">GSA</shortName>
        <ecNumber evidence="1">5.4.3.8</ecNumber>
    </recommendedName>
    <alternativeName>
        <fullName evidence="1">Glutamate-1-semialdehyde aminotransferase</fullName>
        <shortName evidence="1">GSA-AT</shortName>
    </alternativeName>
</protein>
<reference key="1">
    <citation type="submission" date="2008-05" db="EMBL/GenBank/DDBJ databases">
        <title>Genome sequence of Helicobacter pylori from the remote Amazon: traces of Asian ancestry of the first Americans.</title>
        <authorList>
            <person name="Kersulyte D."/>
            <person name="Kalia A."/>
            <person name="Gilman R.H."/>
            <person name="Berg D.E."/>
        </authorList>
    </citation>
    <scope>NUCLEOTIDE SEQUENCE [LARGE SCALE GENOMIC DNA]</scope>
    <source>
        <strain>Shi470</strain>
    </source>
</reference>
<organism>
    <name type="scientific">Helicobacter pylori (strain Shi470)</name>
    <dbReference type="NCBI Taxonomy" id="512562"/>
    <lineage>
        <taxon>Bacteria</taxon>
        <taxon>Pseudomonadati</taxon>
        <taxon>Campylobacterota</taxon>
        <taxon>Epsilonproteobacteria</taxon>
        <taxon>Campylobacterales</taxon>
        <taxon>Helicobacteraceae</taxon>
        <taxon>Helicobacter</taxon>
    </lineage>
</organism>
<proteinExistence type="inferred from homology"/>
<evidence type="ECO:0000255" key="1">
    <source>
        <dbReference type="HAMAP-Rule" id="MF_00375"/>
    </source>
</evidence>
<dbReference type="EC" id="5.4.3.8" evidence="1"/>
<dbReference type="EMBL" id="CP001072">
    <property type="protein sequence ID" value="ACD47769.1"/>
    <property type="molecule type" value="Genomic_DNA"/>
</dbReference>
<dbReference type="RefSeq" id="WP_000421500.1">
    <property type="nucleotide sequence ID" value="NC_010698.2"/>
</dbReference>
<dbReference type="SMR" id="B2USD7"/>
<dbReference type="KEGG" id="hps:HPSH_01585"/>
<dbReference type="HOGENOM" id="CLU_016922_1_5_7"/>
<dbReference type="UniPathway" id="UPA00251">
    <property type="reaction ID" value="UER00317"/>
</dbReference>
<dbReference type="GO" id="GO:0005737">
    <property type="term" value="C:cytoplasm"/>
    <property type="evidence" value="ECO:0007669"/>
    <property type="project" value="UniProtKB-SubCell"/>
</dbReference>
<dbReference type="GO" id="GO:0042286">
    <property type="term" value="F:glutamate-1-semialdehyde 2,1-aminomutase activity"/>
    <property type="evidence" value="ECO:0007669"/>
    <property type="project" value="UniProtKB-UniRule"/>
</dbReference>
<dbReference type="GO" id="GO:0030170">
    <property type="term" value="F:pyridoxal phosphate binding"/>
    <property type="evidence" value="ECO:0007669"/>
    <property type="project" value="InterPro"/>
</dbReference>
<dbReference type="GO" id="GO:0008483">
    <property type="term" value="F:transaminase activity"/>
    <property type="evidence" value="ECO:0007669"/>
    <property type="project" value="InterPro"/>
</dbReference>
<dbReference type="GO" id="GO:0006782">
    <property type="term" value="P:protoporphyrinogen IX biosynthetic process"/>
    <property type="evidence" value="ECO:0007669"/>
    <property type="project" value="UniProtKB-UniRule"/>
</dbReference>
<dbReference type="CDD" id="cd00610">
    <property type="entry name" value="OAT_like"/>
    <property type="match status" value="1"/>
</dbReference>
<dbReference type="FunFam" id="3.40.640.10:FF:000021">
    <property type="entry name" value="Glutamate-1-semialdehyde 2,1-aminomutase"/>
    <property type="match status" value="1"/>
</dbReference>
<dbReference type="Gene3D" id="3.90.1150.10">
    <property type="entry name" value="Aspartate Aminotransferase, domain 1"/>
    <property type="match status" value="1"/>
</dbReference>
<dbReference type="Gene3D" id="3.40.640.10">
    <property type="entry name" value="Type I PLP-dependent aspartate aminotransferase-like (Major domain)"/>
    <property type="match status" value="1"/>
</dbReference>
<dbReference type="HAMAP" id="MF_00375">
    <property type="entry name" value="HemL_aminotrans_3"/>
    <property type="match status" value="1"/>
</dbReference>
<dbReference type="InterPro" id="IPR004639">
    <property type="entry name" value="4pyrrol_synth_GluAld_NH2Trfase"/>
</dbReference>
<dbReference type="InterPro" id="IPR005814">
    <property type="entry name" value="Aminotrans_3"/>
</dbReference>
<dbReference type="InterPro" id="IPR049704">
    <property type="entry name" value="Aminotrans_3_PPA_site"/>
</dbReference>
<dbReference type="InterPro" id="IPR015424">
    <property type="entry name" value="PyrdxlP-dep_Trfase"/>
</dbReference>
<dbReference type="InterPro" id="IPR015421">
    <property type="entry name" value="PyrdxlP-dep_Trfase_major"/>
</dbReference>
<dbReference type="InterPro" id="IPR015422">
    <property type="entry name" value="PyrdxlP-dep_Trfase_small"/>
</dbReference>
<dbReference type="NCBIfam" id="TIGR00713">
    <property type="entry name" value="hemL"/>
    <property type="match status" value="1"/>
</dbReference>
<dbReference type="NCBIfam" id="NF000818">
    <property type="entry name" value="PRK00062.1"/>
    <property type="match status" value="1"/>
</dbReference>
<dbReference type="PANTHER" id="PTHR43713">
    <property type="entry name" value="GLUTAMATE-1-SEMIALDEHYDE 2,1-AMINOMUTASE"/>
    <property type="match status" value="1"/>
</dbReference>
<dbReference type="PANTHER" id="PTHR43713:SF3">
    <property type="entry name" value="GLUTAMATE-1-SEMIALDEHYDE 2,1-AMINOMUTASE 1, CHLOROPLASTIC-RELATED"/>
    <property type="match status" value="1"/>
</dbReference>
<dbReference type="Pfam" id="PF00202">
    <property type="entry name" value="Aminotran_3"/>
    <property type="match status" value="1"/>
</dbReference>
<dbReference type="SUPFAM" id="SSF53383">
    <property type="entry name" value="PLP-dependent transferases"/>
    <property type="match status" value="1"/>
</dbReference>
<dbReference type="PROSITE" id="PS00600">
    <property type="entry name" value="AA_TRANSFER_CLASS_3"/>
    <property type="match status" value="1"/>
</dbReference>
<sequence>MELLHSINDFNEAKQVIAGGVNSPVRAFKSVKGTPPFILKGKGAYLYDVDNNHYIDFVQSWGPLIFGHADEEIEENIINVLKKGTSFGTPTELETTLAKEIISCYEGLDKVRLVSSGTEATMSAIRLARAYSQKDDLIKFEGCYHGHSDSLLVKAGSGCATFGSPSSLGVPNDFSKHTLVARYNDLNSTEECFKKGDVGCVIIEPIAGNMGLVPAQKEFLLGLKALCEKYQAVLILDEVMSGFRASLSGSQEFYGVVPDLVTFGKVIGAGLPLACFGGRAEIMDLLSPIGGVYQAGTLSGNPLAVCAGLSALYKIKRDKTLYTRLNALAVRLAQGLKKSAQSYNIALETLNRGSMFGFFFNENAVRDFDDALKSDTEMFAKFHQKMLFKGVYLACSSFETGFICEPMTEEMIDLAVAKADESFDEIIKGV</sequence>
<comment type="catalytic activity">
    <reaction evidence="1">
        <text>(S)-4-amino-5-oxopentanoate = 5-aminolevulinate</text>
        <dbReference type="Rhea" id="RHEA:14265"/>
        <dbReference type="ChEBI" id="CHEBI:57501"/>
        <dbReference type="ChEBI" id="CHEBI:356416"/>
        <dbReference type="EC" id="5.4.3.8"/>
    </reaction>
</comment>
<comment type="cofactor">
    <cofactor evidence="1">
        <name>pyridoxal 5'-phosphate</name>
        <dbReference type="ChEBI" id="CHEBI:597326"/>
    </cofactor>
</comment>
<comment type="pathway">
    <text evidence="1">Porphyrin-containing compound metabolism; protoporphyrin-IX biosynthesis; 5-aminolevulinate from L-glutamyl-tRNA(Glu): step 2/2.</text>
</comment>
<comment type="subunit">
    <text evidence="1">Homodimer.</text>
</comment>
<comment type="subcellular location">
    <subcellularLocation>
        <location evidence="1">Cytoplasm</location>
    </subcellularLocation>
</comment>
<comment type="similarity">
    <text evidence="1">Belongs to the class-III pyridoxal-phosphate-dependent aminotransferase family. HemL subfamily.</text>
</comment>
<name>GSA_HELPS</name>